<gene>
    <name evidence="1" type="primary">rpsR</name>
    <name type="ordered locus">SRU_1366</name>
</gene>
<organism>
    <name type="scientific">Salinibacter ruber (strain DSM 13855 / M31)</name>
    <dbReference type="NCBI Taxonomy" id="309807"/>
    <lineage>
        <taxon>Bacteria</taxon>
        <taxon>Pseudomonadati</taxon>
        <taxon>Rhodothermota</taxon>
        <taxon>Rhodothermia</taxon>
        <taxon>Rhodothermales</taxon>
        <taxon>Salinibacteraceae</taxon>
        <taxon>Salinibacter</taxon>
    </lineage>
</organism>
<evidence type="ECO:0000255" key="1">
    <source>
        <dbReference type="HAMAP-Rule" id="MF_00270"/>
    </source>
</evidence>
<evidence type="ECO:0000305" key="2"/>
<sequence length="70" mass="8262">MADQNDVDYEHLEYVDYKDTEFLEQFINNQGKILPRRVTGVPARVQRQITKAIKRARHLALMPYVSESVR</sequence>
<dbReference type="EMBL" id="CP000159">
    <property type="protein sequence ID" value="ABC46330.1"/>
    <property type="molecule type" value="Genomic_DNA"/>
</dbReference>
<dbReference type="RefSeq" id="WP_011404118.1">
    <property type="nucleotide sequence ID" value="NC_007677.1"/>
</dbReference>
<dbReference type="RefSeq" id="YP_445490.1">
    <property type="nucleotide sequence ID" value="NC_007677.1"/>
</dbReference>
<dbReference type="SMR" id="Q2S2U1"/>
<dbReference type="STRING" id="309807.SRU_1366"/>
<dbReference type="EnsemblBacteria" id="ABC46330">
    <property type="protein sequence ID" value="ABC46330"/>
    <property type="gene ID" value="SRU_1366"/>
</dbReference>
<dbReference type="GeneID" id="83728279"/>
<dbReference type="KEGG" id="sru:SRU_1366"/>
<dbReference type="PATRIC" id="fig|309807.25.peg.1420"/>
<dbReference type="eggNOG" id="COG0238">
    <property type="taxonomic scope" value="Bacteria"/>
</dbReference>
<dbReference type="HOGENOM" id="CLU_148710_1_1_10"/>
<dbReference type="OrthoDB" id="9812008at2"/>
<dbReference type="Proteomes" id="UP000008674">
    <property type="component" value="Chromosome"/>
</dbReference>
<dbReference type="GO" id="GO:1990904">
    <property type="term" value="C:ribonucleoprotein complex"/>
    <property type="evidence" value="ECO:0007669"/>
    <property type="project" value="UniProtKB-KW"/>
</dbReference>
<dbReference type="GO" id="GO:0005840">
    <property type="term" value="C:ribosome"/>
    <property type="evidence" value="ECO:0007669"/>
    <property type="project" value="UniProtKB-KW"/>
</dbReference>
<dbReference type="GO" id="GO:0070181">
    <property type="term" value="F:small ribosomal subunit rRNA binding"/>
    <property type="evidence" value="ECO:0007669"/>
    <property type="project" value="TreeGrafter"/>
</dbReference>
<dbReference type="GO" id="GO:0003735">
    <property type="term" value="F:structural constituent of ribosome"/>
    <property type="evidence" value="ECO:0007669"/>
    <property type="project" value="InterPro"/>
</dbReference>
<dbReference type="GO" id="GO:0006412">
    <property type="term" value="P:translation"/>
    <property type="evidence" value="ECO:0007669"/>
    <property type="project" value="UniProtKB-UniRule"/>
</dbReference>
<dbReference type="Gene3D" id="4.10.640.10">
    <property type="entry name" value="Ribosomal protein S18"/>
    <property type="match status" value="1"/>
</dbReference>
<dbReference type="HAMAP" id="MF_00270">
    <property type="entry name" value="Ribosomal_bS18"/>
    <property type="match status" value="1"/>
</dbReference>
<dbReference type="InterPro" id="IPR001648">
    <property type="entry name" value="Ribosomal_bS18"/>
</dbReference>
<dbReference type="InterPro" id="IPR018275">
    <property type="entry name" value="Ribosomal_bS18_CS"/>
</dbReference>
<dbReference type="InterPro" id="IPR036870">
    <property type="entry name" value="Ribosomal_bS18_sf"/>
</dbReference>
<dbReference type="NCBIfam" id="TIGR00165">
    <property type="entry name" value="S18"/>
    <property type="match status" value="1"/>
</dbReference>
<dbReference type="PANTHER" id="PTHR13479">
    <property type="entry name" value="30S RIBOSOMAL PROTEIN S18"/>
    <property type="match status" value="1"/>
</dbReference>
<dbReference type="PANTHER" id="PTHR13479:SF40">
    <property type="entry name" value="SMALL RIBOSOMAL SUBUNIT PROTEIN BS18M"/>
    <property type="match status" value="1"/>
</dbReference>
<dbReference type="Pfam" id="PF01084">
    <property type="entry name" value="Ribosomal_S18"/>
    <property type="match status" value="1"/>
</dbReference>
<dbReference type="PRINTS" id="PR00974">
    <property type="entry name" value="RIBOSOMALS18"/>
</dbReference>
<dbReference type="SUPFAM" id="SSF46911">
    <property type="entry name" value="Ribosomal protein S18"/>
    <property type="match status" value="1"/>
</dbReference>
<dbReference type="PROSITE" id="PS00057">
    <property type="entry name" value="RIBOSOMAL_S18"/>
    <property type="match status" value="1"/>
</dbReference>
<accession>Q2S2U1</accession>
<keyword id="KW-1185">Reference proteome</keyword>
<keyword id="KW-0687">Ribonucleoprotein</keyword>
<keyword id="KW-0689">Ribosomal protein</keyword>
<keyword id="KW-0694">RNA-binding</keyword>
<keyword id="KW-0699">rRNA-binding</keyword>
<feature type="chain" id="PRO_0000345543" description="Small ribosomal subunit protein bS18">
    <location>
        <begin position="1"/>
        <end position="70"/>
    </location>
</feature>
<name>RS18_SALRD</name>
<protein>
    <recommendedName>
        <fullName evidence="1">Small ribosomal subunit protein bS18</fullName>
    </recommendedName>
    <alternativeName>
        <fullName evidence="2">30S ribosomal protein S18</fullName>
    </alternativeName>
</protein>
<reference key="1">
    <citation type="journal article" date="2005" name="Proc. Natl. Acad. Sci. U.S.A.">
        <title>The genome of Salinibacter ruber: convergence and gene exchange among hyperhalophilic bacteria and archaea.</title>
        <authorList>
            <person name="Mongodin E.F."/>
            <person name="Nelson K.E."/>
            <person name="Daugherty S."/>
            <person name="DeBoy R.T."/>
            <person name="Wister J."/>
            <person name="Khouri H."/>
            <person name="Weidman J."/>
            <person name="Walsh D.A."/>
            <person name="Papke R.T."/>
            <person name="Sanchez Perez G."/>
            <person name="Sharma A.K."/>
            <person name="Nesbo C.L."/>
            <person name="MacLeod D."/>
            <person name="Bapteste E."/>
            <person name="Doolittle W.F."/>
            <person name="Charlebois R.L."/>
            <person name="Legault B."/>
            <person name="Rodriguez-Valera F."/>
        </authorList>
    </citation>
    <scope>NUCLEOTIDE SEQUENCE [LARGE SCALE GENOMIC DNA]</scope>
    <source>
        <strain>DSM 13855 / CECT 5946 / M31</strain>
    </source>
</reference>
<proteinExistence type="inferred from homology"/>
<comment type="function">
    <text evidence="1">Binds as a heterodimer with protein bS6 to the central domain of the 16S rRNA, where it helps stabilize the platform of the 30S subunit.</text>
</comment>
<comment type="subunit">
    <text evidence="1">Part of the 30S ribosomal subunit. Forms a tight heterodimer with protein bS6.</text>
</comment>
<comment type="similarity">
    <text evidence="1">Belongs to the bacterial ribosomal protein bS18 family.</text>
</comment>